<organism>
    <name type="scientific">Shigella dysenteriae serotype 1 (strain Sd197)</name>
    <dbReference type="NCBI Taxonomy" id="300267"/>
    <lineage>
        <taxon>Bacteria</taxon>
        <taxon>Pseudomonadati</taxon>
        <taxon>Pseudomonadota</taxon>
        <taxon>Gammaproteobacteria</taxon>
        <taxon>Enterobacterales</taxon>
        <taxon>Enterobacteriaceae</taxon>
        <taxon>Shigella</taxon>
    </lineage>
</organism>
<feature type="chain" id="PRO_1000004193" description="Large ribosomal subunit protein bL33">
    <location>
        <begin position="1"/>
        <end position="55"/>
    </location>
</feature>
<evidence type="ECO:0000255" key="1">
    <source>
        <dbReference type="HAMAP-Rule" id="MF_00294"/>
    </source>
</evidence>
<evidence type="ECO:0000305" key="2"/>
<protein>
    <recommendedName>
        <fullName evidence="1">Large ribosomal subunit protein bL33</fullName>
    </recommendedName>
    <alternativeName>
        <fullName evidence="2">50S ribosomal protein L33</fullName>
    </alternativeName>
</protein>
<proteinExistence type="inferred from homology"/>
<keyword id="KW-1185">Reference proteome</keyword>
<keyword id="KW-0687">Ribonucleoprotein</keyword>
<keyword id="KW-0689">Ribosomal protein</keyword>
<name>RL33_SHIDS</name>
<dbReference type="EMBL" id="CP000034">
    <property type="protein sequence ID" value="ABB63984.1"/>
    <property type="molecule type" value="Genomic_DNA"/>
</dbReference>
<dbReference type="RefSeq" id="WP_001051798.1">
    <property type="nucleotide sequence ID" value="NC_007606.1"/>
</dbReference>
<dbReference type="RefSeq" id="YP_405475.1">
    <property type="nucleotide sequence ID" value="NC_007606.1"/>
</dbReference>
<dbReference type="SMR" id="Q329M1"/>
<dbReference type="STRING" id="300267.SDY_4066"/>
<dbReference type="EnsemblBacteria" id="ABB63984">
    <property type="protein sequence ID" value="ABB63984"/>
    <property type="gene ID" value="SDY_4066"/>
</dbReference>
<dbReference type="GeneID" id="97607673"/>
<dbReference type="KEGG" id="sdy:SDY_4066"/>
<dbReference type="PATRIC" id="fig|300267.13.peg.4782"/>
<dbReference type="HOGENOM" id="CLU_190949_1_1_6"/>
<dbReference type="PRO" id="PR:Q329M1"/>
<dbReference type="Proteomes" id="UP000002716">
    <property type="component" value="Chromosome"/>
</dbReference>
<dbReference type="GO" id="GO:0022625">
    <property type="term" value="C:cytosolic large ribosomal subunit"/>
    <property type="evidence" value="ECO:0007669"/>
    <property type="project" value="TreeGrafter"/>
</dbReference>
<dbReference type="GO" id="GO:0003735">
    <property type="term" value="F:structural constituent of ribosome"/>
    <property type="evidence" value="ECO:0007669"/>
    <property type="project" value="InterPro"/>
</dbReference>
<dbReference type="GO" id="GO:0006412">
    <property type="term" value="P:translation"/>
    <property type="evidence" value="ECO:0007669"/>
    <property type="project" value="UniProtKB-UniRule"/>
</dbReference>
<dbReference type="FunFam" id="2.20.28.120:FF:000001">
    <property type="entry name" value="50S ribosomal protein L33"/>
    <property type="match status" value="1"/>
</dbReference>
<dbReference type="Gene3D" id="2.20.28.120">
    <property type="entry name" value="Ribosomal protein L33"/>
    <property type="match status" value="1"/>
</dbReference>
<dbReference type="HAMAP" id="MF_00294">
    <property type="entry name" value="Ribosomal_bL33"/>
    <property type="match status" value="1"/>
</dbReference>
<dbReference type="InterPro" id="IPR001705">
    <property type="entry name" value="Ribosomal_bL33"/>
</dbReference>
<dbReference type="InterPro" id="IPR018264">
    <property type="entry name" value="Ribosomal_bL33_CS"/>
</dbReference>
<dbReference type="InterPro" id="IPR038584">
    <property type="entry name" value="Ribosomal_bL33_sf"/>
</dbReference>
<dbReference type="InterPro" id="IPR011332">
    <property type="entry name" value="Ribosomal_zn-bd"/>
</dbReference>
<dbReference type="NCBIfam" id="NF001860">
    <property type="entry name" value="PRK00595.1"/>
    <property type="match status" value="1"/>
</dbReference>
<dbReference type="NCBIfam" id="TIGR01023">
    <property type="entry name" value="rpmG_bact"/>
    <property type="match status" value="1"/>
</dbReference>
<dbReference type="PANTHER" id="PTHR15238">
    <property type="entry name" value="54S RIBOSOMAL PROTEIN L39, MITOCHONDRIAL"/>
    <property type="match status" value="1"/>
</dbReference>
<dbReference type="PANTHER" id="PTHR15238:SF1">
    <property type="entry name" value="LARGE RIBOSOMAL SUBUNIT PROTEIN BL33M"/>
    <property type="match status" value="1"/>
</dbReference>
<dbReference type="Pfam" id="PF00471">
    <property type="entry name" value="Ribosomal_L33"/>
    <property type="match status" value="1"/>
</dbReference>
<dbReference type="SUPFAM" id="SSF57829">
    <property type="entry name" value="Zn-binding ribosomal proteins"/>
    <property type="match status" value="1"/>
</dbReference>
<dbReference type="PROSITE" id="PS00582">
    <property type="entry name" value="RIBOSOMAL_L33"/>
    <property type="match status" value="1"/>
</dbReference>
<reference key="1">
    <citation type="journal article" date="2005" name="Nucleic Acids Res.">
        <title>Genome dynamics and diversity of Shigella species, the etiologic agents of bacillary dysentery.</title>
        <authorList>
            <person name="Yang F."/>
            <person name="Yang J."/>
            <person name="Zhang X."/>
            <person name="Chen L."/>
            <person name="Jiang Y."/>
            <person name="Yan Y."/>
            <person name="Tang X."/>
            <person name="Wang J."/>
            <person name="Xiong Z."/>
            <person name="Dong J."/>
            <person name="Xue Y."/>
            <person name="Zhu Y."/>
            <person name="Xu X."/>
            <person name="Sun L."/>
            <person name="Chen S."/>
            <person name="Nie H."/>
            <person name="Peng J."/>
            <person name="Xu J."/>
            <person name="Wang Y."/>
            <person name="Yuan Z."/>
            <person name="Wen Y."/>
            <person name="Yao Z."/>
            <person name="Shen Y."/>
            <person name="Qiang B."/>
            <person name="Hou Y."/>
            <person name="Yu J."/>
            <person name="Jin Q."/>
        </authorList>
    </citation>
    <scope>NUCLEOTIDE SEQUENCE [LARGE SCALE GENOMIC DNA]</scope>
    <source>
        <strain>Sd197</strain>
    </source>
</reference>
<comment type="similarity">
    <text evidence="1">Belongs to the bacterial ribosomal protein bL33 family.</text>
</comment>
<accession>Q329M1</accession>
<gene>
    <name evidence="1" type="primary">rpmG</name>
    <name type="ordered locus">SDY_4066</name>
</gene>
<sequence>MAKGIREKIKLVSSAGTGHFYTTTKNKRTKPEKLELKKFDPVVRQHVIYKEAKIK</sequence>